<name>VP6_BTVBZ</name>
<sequence length="329" mass="35516">MSAAILLAPGDVIKRSSEELKQRQIQINLVDWMESEGGKEDKTEPKEESKAEGSKDGEGTQSESGQKEEGGKETKDADVDRRIHTAVGSGSGTKGSGERANENANRGDGKVGGGGGDADAGVGATGTNGGRWVVLTEEIARAIESKYGTKIDVYRDDVPAQIIEVERSLQKELGISREGVAEQTERLRDLRRKEKNGTHAKAVERGGRKQRKKAHGDAQREGVEEEKTSEEPARIGITIEGVMSQKKLLSMIGGVERKMAPIGARESAVMLVSNSIKDVVRATAYFTAPTGDPHWKEVAREASKKKNILAYTSTGGDVKTEFLHLIDHL</sequence>
<organismHost>
    <name type="scientific">Antilocapra americana</name>
    <name type="common">Pronghorn</name>
    <dbReference type="NCBI Taxonomy" id="9891"/>
</organismHost>
<organismHost>
    <name type="scientific">Bos taurus</name>
    <name type="common">Bovine</name>
    <dbReference type="NCBI Taxonomy" id="9913"/>
</organismHost>
<organismHost>
    <name type="scientific">Capra hircus</name>
    <name type="common">Goat</name>
    <dbReference type="NCBI Taxonomy" id="9925"/>
</organismHost>
<organismHost>
    <name type="scientific">Culicoides variipennis</name>
    <name type="common">Biting midge</name>
    <dbReference type="NCBI Taxonomy" id="46212"/>
</organismHost>
<organismHost>
    <name type="scientific">Ovis aries</name>
    <name type="common">Sheep</name>
    <dbReference type="NCBI Taxonomy" id="9940"/>
</organismHost>
<proteinExistence type="inferred from homology"/>
<dbReference type="EC" id="3.6.4.13" evidence="1"/>
<dbReference type="EMBL" id="U55791">
    <property type="protein sequence ID" value="AAC55319.1"/>
    <property type="molecule type" value="Genomic_RNA"/>
</dbReference>
<dbReference type="RefSeq" id="YP_052953.1">
    <property type="nucleotide sequence ID" value="NC_006008.1"/>
</dbReference>
<dbReference type="SMR" id="P0C6L1"/>
<dbReference type="KEGG" id="vg:2943150"/>
<dbReference type="GO" id="GO:0039625">
    <property type="term" value="C:viral inner capsid"/>
    <property type="evidence" value="ECO:0007669"/>
    <property type="project" value="UniProtKB-KW"/>
</dbReference>
<dbReference type="GO" id="GO:0005524">
    <property type="term" value="F:ATP binding"/>
    <property type="evidence" value="ECO:0007669"/>
    <property type="project" value="UniProtKB-KW"/>
</dbReference>
<dbReference type="GO" id="GO:0016787">
    <property type="term" value="F:hydrolase activity"/>
    <property type="evidence" value="ECO:0007669"/>
    <property type="project" value="UniProtKB-KW"/>
</dbReference>
<dbReference type="GO" id="GO:0005198">
    <property type="term" value="F:structural molecule activity"/>
    <property type="evidence" value="ECO:0007669"/>
    <property type="project" value="InterPro"/>
</dbReference>
<dbReference type="InterPro" id="IPR001399">
    <property type="entry name" value="Orbi_VP6"/>
</dbReference>
<dbReference type="Pfam" id="PF01516">
    <property type="entry name" value="Orbi_VP6"/>
    <property type="match status" value="1"/>
</dbReference>
<dbReference type="PRINTS" id="PR00902">
    <property type="entry name" value="VP6CAPSID"/>
</dbReference>
<keyword id="KW-0024">Alternative initiation</keyword>
<keyword id="KW-0067">ATP-binding</keyword>
<keyword id="KW-0167">Capsid protein</keyword>
<keyword id="KW-0378">Hydrolase</keyword>
<keyword id="KW-1153">Inner capsid protein</keyword>
<keyword id="KW-0547">Nucleotide-binding</keyword>
<keyword id="KW-0946">Virion</keyword>
<gene>
    <name type="primary">Segment-9</name>
</gene>
<reference key="1">
    <citation type="journal article" date="1996" name="J. Virol.">
        <title>Phylogenetic comparison of the S3 gene of United States prototype strains of bluetongue virus with that of field isolates from California.</title>
        <authorList>
            <person name="de Mattos C.C."/>
            <person name="de Mattos C.A."/>
            <person name="MacLachlan N.J."/>
            <person name="Giavedoni L.D."/>
            <person name="Yilma T."/>
            <person name="Osburn B.I."/>
        </authorList>
    </citation>
    <scope>NUCLEOTIDE SEQUENCE [GENOMIC DNA]</scope>
    <source>
        <strain>13B89Z</strain>
    </source>
</reference>
<feature type="chain" id="PRO_0000222722" description="Helicase VP6-A">
    <location>
        <begin position="1"/>
        <end position="329"/>
    </location>
</feature>
<feature type="region of interest" description="Disordered" evidence="2">
    <location>
        <begin position="27"/>
        <end position="130"/>
    </location>
</feature>
<feature type="region of interest" description="Disordered" evidence="2">
    <location>
        <begin position="189"/>
        <end position="232"/>
    </location>
</feature>
<feature type="compositionally biased region" description="Basic and acidic residues" evidence="2">
    <location>
        <begin position="36"/>
        <end position="58"/>
    </location>
</feature>
<feature type="compositionally biased region" description="Basic and acidic residues" evidence="2">
    <location>
        <begin position="65"/>
        <end position="83"/>
    </location>
</feature>
<feature type="compositionally biased region" description="Basic and acidic residues" evidence="2">
    <location>
        <begin position="96"/>
        <end position="109"/>
    </location>
</feature>
<feature type="compositionally biased region" description="Gly residues" evidence="2">
    <location>
        <begin position="110"/>
        <end position="129"/>
    </location>
</feature>
<feature type="compositionally biased region" description="Basic and acidic residues" evidence="2">
    <location>
        <begin position="189"/>
        <end position="207"/>
    </location>
</feature>
<feature type="compositionally biased region" description="Basic and acidic residues" evidence="2">
    <location>
        <begin position="215"/>
        <end position="232"/>
    </location>
</feature>
<feature type="binding site" evidence="1">
    <location>
        <position position="110"/>
    </location>
    <ligand>
        <name>ATP</name>
        <dbReference type="ChEBI" id="CHEBI:30616"/>
    </ligand>
</feature>
<accession>P0C6L1</accession>
<accession>P23066</accession>
<accession>Q6LCJ9</accession>
<comment type="function">
    <text evidence="1">ATP dependent RNA helicase essential for RNA packaging and viral transcription. Possesses ss- and dsRNA-binding capacity.</text>
</comment>
<comment type="catalytic activity">
    <reaction evidence="1">
        <text>ATP + H2O = ADP + phosphate + H(+)</text>
        <dbReference type="Rhea" id="RHEA:13065"/>
        <dbReference type="ChEBI" id="CHEBI:15377"/>
        <dbReference type="ChEBI" id="CHEBI:15378"/>
        <dbReference type="ChEBI" id="CHEBI:30616"/>
        <dbReference type="ChEBI" id="CHEBI:43474"/>
        <dbReference type="ChEBI" id="CHEBI:456216"/>
        <dbReference type="EC" id="3.6.4.13"/>
    </reaction>
</comment>
<comment type="subunit">
    <text evidence="1">Homohexamer.</text>
</comment>
<comment type="subcellular location">
    <subcellularLocation>
        <location>Virion</location>
    </subcellularLocation>
    <text>Inner capsid.</text>
</comment>
<comment type="alternative products">
    <event type="alternative initiation"/>
    <isoform>
        <id>P0C6L1-1</id>
        <name>Protein VP6</name>
        <sequence type="displayed"/>
    </isoform>
    <isoform>
        <id>P0DJZ7-1</id>
        <name>Protein NS4</name>
        <sequence type="external"/>
    </isoform>
</comment>
<comment type="similarity">
    <text evidence="3">Belongs to the reoviruses VP6 family.</text>
</comment>
<organism>
    <name type="scientific">Bluetongue virus 13 (isolate 13B89Z)</name>
    <name type="common">BTV 13</name>
    <dbReference type="NCBI Taxonomy" id="355314"/>
    <lineage>
        <taxon>Viruses</taxon>
        <taxon>Riboviria</taxon>
        <taxon>Orthornavirae</taxon>
        <taxon>Duplornaviricota</taxon>
        <taxon>Resentoviricetes</taxon>
        <taxon>Reovirales</taxon>
        <taxon>Sedoreoviridae</taxon>
        <taxon>Orbivirus</taxon>
        <taxon>Bluetongue virus</taxon>
    </lineage>
</organism>
<evidence type="ECO:0000250" key="1">
    <source>
        <dbReference type="UniProtKB" id="Q98829"/>
    </source>
</evidence>
<evidence type="ECO:0000256" key="2">
    <source>
        <dbReference type="SAM" id="MobiDB-lite"/>
    </source>
</evidence>
<evidence type="ECO:0000305" key="3"/>
<protein>
    <recommendedName>
        <fullName>Helicase VP6-A</fullName>
        <ecNumber evidence="1">3.6.4.13</ecNumber>
    </recommendedName>
    <alternativeName>
        <fullName>Minor inner core protein VP6</fullName>
    </alternativeName>
</protein>